<dbReference type="EC" id="3.1.3.11" evidence="1"/>
<dbReference type="EMBL" id="CU207211">
    <property type="protein sequence ID" value="CAL60777.1"/>
    <property type="molecule type" value="Genomic_DNA"/>
</dbReference>
<dbReference type="SMR" id="A4G2P0"/>
<dbReference type="STRING" id="204773.HEAR0572"/>
<dbReference type="KEGG" id="har:HEAR0572"/>
<dbReference type="eggNOG" id="COG0158">
    <property type="taxonomic scope" value="Bacteria"/>
</dbReference>
<dbReference type="HOGENOM" id="CLU_039977_0_0_4"/>
<dbReference type="OrthoDB" id="9806756at2"/>
<dbReference type="UniPathway" id="UPA00138"/>
<dbReference type="Proteomes" id="UP000006697">
    <property type="component" value="Chromosome"/>
</dbReference>
<dbReference type="GO" id="GO:0005829">
    <property type="term" value="C:cytosol"/>
    <property type="evidence" value="ECO:0007669"/>
    <property type="project" value="TreeGrafter"/>
</dbReference>
<dbReference type="GO" id="GO:0042132">
    <property type="term" value="F:fructose 1,6-bisphosphate 1-phosphatase activity"/>
    <property type="evidence" value="ECO:0007669"/>
    <property type="project" value="UniProtKB-UniRule"/>
</dbReference>
<dbReference type="GO" id="GO:0000287">
    <property type="term" value="F:magnesium ion binding"/>
    <property type="evidence" value="ECO:0007669"/>
    <property type="project" value="UniProtKB-UniRule"/>
</dbReference>
<dbReference type="GO" id="GO:0030388">
    <property type="term" value="P:fructose 1,6-bisphosphate metabolic process"/>
    <property type="evidence" value="ECO:0007669"/>
    <property type="project" value="TreeGrafter"/>
</dbReference>
<dbReference type="GO" id="GO:0006002">
    <property type="term" value="P:fructose 6-phosphate metabolic process"/>
    <property type="evidence" value="ECO:0007669"/>
    <property type="project" value="TreeGrafter"/>
</dbReference>
<dbReference type="GO" id="GO:0006000">
    <property type="term" value="P:fructose metabolic process"/>
    <property type="evidence" value="ECO:0007669"/>
    <property type="project" value="TreeGrafter"/>
</dbReference>
<dbReference type="GO" id="GO:0006094">
    <property type="term" value="P:gluconeogenesis"/>
    <property type="evidence" value="ECO:0007669"/>
    <property type="project" value="UniProtKB-UniRule"/>
</dbReference>
<dbReference type="GO" id="GO:0005986">
    <property type="term" value="P:sucrose biosynthetic process"/>
    <property type="evidence" value="ECO:0007669"/>
    <property type="project" value="TreeGrafter"/>
</dbReference>
<dbReference type="CDD" id="cd00354">
    <property type="entry name" value="FBPase"/>
    <property type="match status" value="1"/>
</dbReference>
<dbReference type="FunFam" id="3.30.540.10:FF:000006">
    <property type="entry name" value="Fructose-1,6-bisphosphatase class 1"/>
    <property type="match status" value="1"/>
</dbReference>
<dbReference type="FunFam" id="3.40.190.80:FF:000011">
    <property type="entry name" value="Fructose-1,6-bisphosphatase class 1"/>
    <property type="match status" value="1"/>
</dbReference>
<dbReference type="Gene3D" id="3.40.190.80">
    <property type="match status" value="1"/>
</dbReference>
<dbReference type="Gene3D" id="3.30.540.10">
    <property type="entry name" value="Fructose-1,6-Bisphosphatase, subunit A, domain 1"/>
    <property type="match status" value="1"/>
</dbReference>
<dbReference type="HAMAP" id="MF_01855">
    <property type="entry name" value="FBPase_class1"/>
    <property type="match status" value="1"/>
</dbReference>
<dbReference type="InterPro" id="IPR044015">
    <property type="entry name" value="FBPase_C_dom"/>
</dbReference>
<dbReference type="InterPro" id="IPR000146">
    <property type="entry name" value="FBPase_class-1"/>
</dbReference>
<dbReference type="InterPro" id="IPR033391">
    <property type="entry name" value="FBPase_N"/>
</dbReference>
<dbReference type="InterPro" id="IPR028343">
    <property type="entry name" value="FBPtase"/>
</dbReference>
<dbReference type="NCBIfam" id="NF006778">
    <property type="entry name" value="PRK09293.1-1"/>
    <property type="match status" value="1"/>
</dbReference>
<dbReference type="NCBIfam" id="NF006779">
    <property type="entry name" value="PRK09293.1-3"/>
    <property type="match status" value="1"/>
</dbReference>
<dbReference type="NCBIfam" id="NF006780">
    <property type="entry name" value="PRK09293.1-4"/>
    <property type="match status" value="1"/>
</dbReference>
<dbReference type="PANTHER" id="PTHR11556">
    <property type="entry name" value="FRUCTOSE-1,6-BISPHOSPHATASE-RELATED"/>
    <property type="match status" value="1"/>
</dbReference>
<dbReference type="PANTHER" id="PTHR11556:SF35">
    <property type="entry name" value="SEDOHEPTULOSE-1,7-BISPHOSPHATASE, CHLOROPLASTIC"/>
    <property type="match status" value="1"/>
</dbReference>
<dbReference type="Pfam" id="PF00316">
    <property type="entry name" value="FBPase"/>
    <property type="match status" value="1"/>
</dbReference>
<dbReference type="Pfam" id="PF18913">
    <property type="entry name" value="FBPase_C"/>
    <property type="match status" value="1"/>
</dbReference>
<dbReference type="PIRSF" id="PIRSF500210">
    <property type="entry name" value="FBPtase"/>
    <property type="match status" value="1"/>
</dbReference>
<dbReference type="PIRSF" id="PIRSF000904">
    <property type="entry name" value="FBPtase_SBPase"/>
    <property type="match status" value="1"/>
</dbReference>
<dbReference type="PRINTS" id="PR00115">
    <property type="entry name" value="F16BPHPHTASE"/>
</dbReference>
<dbReference type="SUPFAM" id="SSF56655">
    <property type="entry name" value="Carbohydrate phosphatase"/>
    <property type="match status" value="1"/>
</dbReference>
<protein>
    <recommendedName>
        <fullName evidence="1">Fructose-1,6-bisphosphatase class 1</fullName>
        <shortName evidence="1">FBPase class 1</shortName>
        <ecNumber evidence="1">3.1.3.11</ecNumber>
    </recommendedName>
    <alternativeName>
        <fullName evidence="1">D-fructose-1,6-bisphosphate 1-phosphohydrolase class 1</fullName>
    </alternativeName>
</protein>
<accession>A4G2P0</accession>
<comment type="catalytic activity">
    <reaction evidence="1">
        <text>beta-D-fructose 1,6-bisphosphate + H2O = beta-D-fructose 6-phosphate + phosphate</text>
        <dbReference type="Rhea" id="RHEA:11064"/>
        <dbReference type="ChEBI" id="CHEBI:15377"/>
        <dbReference type="ChEBI" id="CHEBI:32966"/>
        <dbReference type="ChEBI" id="CHEBI:43474"/>
        <dbReference type="ChEBI" id="CHEBI:57634"/>
        <dbReference type="EC" id="3.1.3.11"/>
    </reaction>
</comment>
<comment type="cofactor">
    <cofactor evidence="1">
        <name>Mg(2+)</name>
        <dbReference type="ChEBI" id="CHEBI:18420"/>
    </cofactor>
    <text evidence="1">Binds 2 magnesium ions per subunit.</text>
</comment>
<comment type="pathway">
    <text evidence="1">Carbohydrate biosynthesis; gluconeogenesis.</text>
</comment>
<comment type="subunit">
    <text evidence="1">Homotetramer.</text>
</comment>
<comment type="subcellular location">
    <subcellularLocation>
        <location evidence="1">Cytoplasm</location>
    </subcellularLocation>
</comment>
<comment type="similarity">
    <text evidence="1">Belongs to the FBPase class 1 family.</text>
</comment>
<name>F16PA_HERAR</name>
<evidence type="ECO:0000255" key="1">
    <source>
        <dbReference type="HAMAP-Rule" id="MF_01855"/>
    </source>
</evidence>
<organism>
    <name type="scientific">Herminiimonas arsenicoxydans</name>
    <dbReference type="NCBI Taxonomy" id="204773"/>
    <lineage>
        <taxon>Bacteria</taxon>
        <taxon>Pseudomonadati</taxon>
        <taxon>Pseudomonadota</taxon>
        <taxon>Betaproteobacteria</taxon>
        <taxon>Burkholderiales</taxon>
        <taxon>Oxalobacteraceae</taxon>
        <taxon>Herminiimonas</taxon>
    </lineage>
</organism>
<reference key="1">
    <citation type="journal article" date="2007" name="PLoS Genet.">
        <title>A tale of two oxidation states: bacterial colonization of arsenic-rich environments.</title>
        <authorList>
            <person name="Muller D."/>
            <person name="Medigue C."/>
            <person name="Koechler S."/>
            <person name="Barbe V."/>
            <person name="Barakat M."/>
            <person name="Talla E."/>
            <person name="Bonnefoy V."/>
            <person name="Krin E."/>
            <person name="Arsene-Ploetze F."/>
            <person name="Carapito C."/>
            <person name="Chandler M."/>
            <person name="Cournoyer B."/>
            <person name="Cruveiller S."/>
            <person name="Dossat C."/>
            <person name="Duval S."/>
            <person name="Heymann M."/>
            <person name="Leize E."/>
            <person name="Lieutaud A."/>
            <person name="Lievremont D."/>
            <person name="Makita Y."/>
            <person name="Mangenot S."/>
            <person name="Nitschke W."/>
            <person name="Ortet P."/>
            <person name="Perdrial N."/>
            <person name="Schoepp B."/>
            <person name="Siguier P."/>
            <person name="Simeonova D.D."/>
            <person name="Rouy Z."/>
            <person name="Segurens B."/>
            <person name="Turlin E."/>
            <person name="Vallenet D."/>
            <person name="van Dorsselaer A."/>
            <person name="Weiss S."/>
            <person name="Weissenbach J."/>
            <person name="Lett M.-C."/>
            <person name="Danchin A."/>
            <person name="Bertin P.N."/>
        </authorList>
    </citation>
    <scope>NUCLEOTIDE SEQUENCE [LARGE SCALE GENOMIC DNA]</scope>
    <source>
        <strain>ULPAs1</strain>
    </source>
</reference>
<gene>
    <name evidence="1" type="primary">fbp</name>
    <name type="ordered locus">HEAR0572</name>
</gene>
<sequence>MKRISLTQYLIEEQRLHNNIPAELRLLIEVVARACKTISHAVGKGALGEVLGSAQSENVQGEVQKKLDIISNDILLEANEWGGHLAAMASEEMETIHPIPNRYPMGEYLLLFDPLDGSSNIDVNVSIGTIFSVLKAADGMQAAKEADFLQAGSKQVVAGYAVYGPQTVLVLTTGNGVQCFTLDREMGSWVMTQKNMQIPADTKEFAINASNARHWYPPVKRYVDEMLAGTTGPRGKDFNMRWIASMVADVHRILNRGGIFMYPADAREPDKPGKLRLMYEANPMAFLVEQAGGAATDGQQRILDIQPEKLHQRVPVFLGSKNEVDLVTSYHKTK</sequence>
<keyword id="KW-0119">Carbohydrate metabolism</keyword>
<keyword id="KW-0963">Cytoplasm</keyword>
<keyword id="KW-0378">Hydrolase</keyword>
<keyword id="KW-0460">Magnesium</keyword>
<keyword id="KW-0479">Metal-binding</keyword>
<keyword id="KW-1185">Reference proteome</keyword>
<feature type="chain" id="PRO_0000364578" description="Fructose-1,6-bisphosphatase class 1">
    <location>
        <begin position="1"/>
        <end position="334"/>
    </location>
</feature>
<feature type="binding site" evidence="1">
    <location>
        <position position="91"/>
    </location>
    <ligand>
        <name>Mg(2+)</name>
        <dbReference type="ChEBI" id="CHEBI:18420"/>
        <label>1</label>
    </ligand>
</feature>
<feature type="binding site" evidence="1">
    <location>
        <position position="113"/>
    </location>
    <ligand>
        <name>Mg(2+)</name>
        <dbReference type="ChEBI" id="CHEBI:18420"/>
        <label>1</label>
    </ligand>
</feature>
<feature type="binding site" evidence="1">
    <location>
        <position position="113"/>
    </location>
    <ligand>
        <name>Mg(2+)</name>
        <dbReference type="ChEBI" id="CHEBI:18420"/>
        <label>2</label>
    </ligand>
</feature>
<feature type="binding site" evidence="1">
    <location>
        <position position="115"/>
    </location>
    <ligand>
        <name>Mg(2+)</name>
        <dbReference type="ChEBI" id="CHEBI:18420"/>
        <label>1</label>
    </ligand>
</feature>
<feature type="binding site" evidence="1">
    <location>
        <begin position="116"/>
        <end position="119"/>
    </location>
    <ligand>
        <name>substrate</name>
    </ligand>
</feature>
<feature type="binding site" evidence="1">
    <location>
        <position position="116"/>
    </location>
    <ligand>
        <name>Mg(2+)</name>
        <dbReference type="ChEBI" id="CHEBI:18420"/>
        <label>2</label>
    </ligand>
</feature>
<feature type="binding site" evidence="1">
    <location>
        <position position="208"/>
    </location>
    <ligand>
        <name>substrate</name>
    </ligand>
</feature>
<feature type="binding site" evidence="1">
    <location>
        <position position="274"/>
    </location>
    <ligand>
        <name>substrate</name>
    </ligand>
</feature>
<feature type="binding site" evidence="1">
    <location>
        <position position="280"/>
    </location>
    <ligand>
        <name>Mg(2+)</name>
        <dbReference type="ChEBI" id="CHEBI:18420"/>
        <label>2</label>
    </ligand>
</feature>
<proteinExistence type="inferred from homology"/>